<protein>
    <recommendedName>
        <fullName evidence="1">Large ribosomal subunit protein uL18</fullName>
    </recommendedName>
    <alternativeName>
        <fullName evidence="3">50S ribosomal protein L18</fullName>
    </alternativeName>
</protein>
<proteinExistence type="inferred from homology"/>
<feature type="chain" id="PRO_1000142701" description="Large ribosomal subunit protein uL18">
    <location>
        <begin position="1"/>
        <end position="119"/>
    </location>
</feature>
<feature type="region of interest" description="Disordered" evidence="2">
    <location>
        <begin position="1"/>
        <end position="26"/>
    </location>
</feature>
<feature type="compositionally biased region" description="Basic residues" evidence="2">
    <location>
        <begin position="9"/>
        <end position="19"/>
    </location>
</feature>
<sequence>MGQNDKAARRQKIKLRSKTRGQGTAASPRLCVFRSVSQIYAQLVDDVNGATLLAVSSMAKENKELKGTKTEVSHTIGKQIGEKALAQGITKVIFDRNGFRYHGRVKALAEGAREAGLVF</sequence>
<comment type="function">
    <text evidence="1">This is one of the proteins that bind and probably mediate the attachment of the 5S RNA into the large ribosomal subunit, where it forms part of the central protuberance.</text>
</comment>
<comment type="subunit">
    <text evidence="1">Part of the 50S ribosomal subunit; part of the 5S rRNA/L5/L18/L25 subcomplex. Contacts the 5S and 23S rRNAs.</text>
</comment>
<comment type="similarity">
    <text evidence="1">Belongs to the universal ribosomal protein uL18 family.</text>
</comment>
<evidence type="ECO:0000255" key="1">
    <source>
        <dbReference type="HAMAP-Rule" id="MF_01337"/>
    </source>
</evidence>
<evidence type="ECO:0000256" key="2">
    <source>
        <dbReference type="SAM" id="MobiDB-lite"/>
    </source>
</evidence>
<evidence type="ECO:0000305" key="3"/>
<organism>
    <name type="scientific">Prosthecochloris aestuarii (strain DSM 271 / SK 413)</name>
    <dbReference type="NCBI Taxonomy" id="290512"/>
    <lineage>
        <taxon>Bacteria</taxon>
        <taxon>Pseudomonadati</taxon>
        <taxon>Chlorobiota</taxon>
        <taxon>Chlorobiia</taxon>
        <taxon>Chlorobiales</taxon>
        <taxon>Chlorobiaceae</taxon>
        <taxon>Prosthecochloris</taxon>
    </lineage>
</organism>
<reference key="1">
    <citation type="submission" date="2008-06" db="EMBL/GenBank/DDBJ databases">
        <title>Complete sequence of chromosome of Prosthecochloris aestuarii DSM 271.</title>
        <authorList>
            <consortium name="US DOE Joint Genome Institute"/>
            <person name="Lucas S."/>
            <person name="Copeland A."/>
            <person name="Lapidus A."/>
            <person name="Glavina del Rio T."/>
            <person name="Dalin E."/>
            <person name="Tice H."/>
            <person name="Bruce D."/>
            <person name="Goodwin L."/>
            <person name="Pitluck S."/>
            <person name="Schmutz J."/>
            <person name="Larimer F."/>
            <person name="Land M."/>
            <person name="Hauser L."/>
            <person name="Kyrpides N."/>
            <person name="Anderson I."/>
            <person name="Liu Z."/>
            <person name="Li T."/>
            <person name="Zhao F."/>
            <person name="Overmann J."/>
            <person name="Bryant D.A."/>
            <person name="Richardson P."/>
        </authorList>
    </citation>
    <scope>NUCLEOTIDE SEQUENCE [LARGE SCALE GENOMIC DNA]</scope>
    <source>
        <strain>DSM 271 / SK 413</strain>
    </source>
</reference>
<gene>
    <name evidence="1" type="primary">rplR</name>
    <name type="ordered locus">Paes_2048</name>
</gene>
<dbReference type="EMBL" id="CP001108">
    <property type="protein sequence ID" value="ACF47058.1"/>
    <property type="molecule type" value="Genomic_DNA"/>
</dbReference>
<dbReference type="RefSeq" id="WP_012506590.1">
    <property type="nucleotide sequence ID" value="NC_011059.1"/>
</dbReference>
<dbReference type="SMR" id="B4S5B2"/>
<dbReference type="STRING" id="290512.Paes_2048"/>
<dbReference type="KEGG" id="paa:Paes_2048"/>
<dbReference type="eggNOG" id="COG0256">
    <property type="taxonomic scope" value="Bacteria"/>
</dbReference>
<dbReference type="HOGENOM" id="CLU_098841_0_1_10"/>
<dbReference type="Proteomes" id="UP000002725">
    <property type="component" value="Chromosome"/>
</dbReference>
<dbReference type="GO" id="GO:0022625">
    <property type="term" value="C:cytosolic large ribosomal subunit"/>
    <property type="evidence" value="ECO:0007669"/>
    <property type="project" value="TreeGrafter"/>
</dbReference>
<dbReference type="GO" id="GO:0008097">
    <property type="term" value="F:5S rRNA binding"/>
    <property type="evidence" value="ECO:0007669"/>
    <property type="project" value="TreeGrafter"/>
</dbReference>
<dbReference type="GO" id="GO:0003735">
    <property type="term" value="F:structural constituent of ribosome"/>
    <property type="evidence" value="ECO:0007669"/>
    <property type="project" value="InterPro"/>
</dbReference>
<dbReference type="GO" id="GO:0006412">
    <property type="term" value="P:translation"/>
    <property type="evidence" value="ECO:0007669"/>
    <property type="project" value="UniProtKB-UniRule"/>
</dbReference>
<dbReference type="CDD" id="cd00432">
    <property type="entry name" value="Ribosomal_L18_L5e"/>
    <property type="match status" value="1"/>
</dbReference>
<dbReference type="FunFam" id="3.30.420.100:FF:000001">
    <property type="entry name" value="50S ribosomal protein L18"/>
    <property type="match status" value="1"/>
</dbReference>
<dbReference type="Gene3D" id="3.30.420.100">
    <property type="match status" value="1"/>
</dbReference>
<dbReference type="HAMAP" id="MF_01337_B">
    <property type="entry name" value="Ribosomal_uL18_B"/>
    <property type="match status" value="1"/>
</dbReference>
<dbReference type="InterPro" id="IPR004389">
    <property type="entry name" value="Ribosomal_uL18_bac-type"/>
</dbReference>
<dbReference type="InterPro" id="IPR005484">
    <property type="entry name" value="Ribosomal_uL18_bac/euk"/>
</dbReference>
<dbReference type="NCBIfam" id="TIGR00060">
    <property type="entry name" value="L18_bact"/>
    <property type="match status" value="1"/>
</dbReference>
<dbReference type="PANTHER" id="PTHR12899">
    <property type="entry name" value="39S RIBOSOMAL PROTEIN L18, MITOCHONDRIAL"/>
    <property type="match status" value="1"/>
</dbReference>
<dbReference type="PANTHER" id="PTHR12899:SF3">
    <property type="entry name" value="LARGE RIBOSOMAL SUBUNIT PROTEIN UL18M"/>
    <property type="match status" value="1"/>
</dbReference>
<dbReference type="Pfam" id="PF00861">
    <property type="entry name" value="Ribosomal_L18p"/>
    <property type="match status" value="1"/>
</dbReference>
<dbReference type="SUPFAM" id="SSF53137">
    <property type="entry name" value="Translational machinery components"/>
    <property type="match status" value="1"/>
</dbReference>
<name>RL18_PROA2</name>
<keyword id="KW-0687">Ribonucleoprotein</keyword>
<keyword id="KW-0689">Ribosomal protein</keyword>
<keyword id="KW-0694">RNA-binding</keyword>
<keyword id="KW-0699">rRNA-binding</keyword>
<accession>B4S5B2</accession>